<accession>Q0HNU7</accession>
<comment type="function">
    <text evidence="1">Binds directly to 23S rRNA. The L1 stalk is quite mobile in the ribosome, and is involved in E site tRNA release.</text>
</comment>
<comment type="function">
    <text evidence="1">Protein L1 is also a translational repressor protein, it controls the translation of the L11 operon by binding to its mRNA.</text>
</comment>
<comment type="subunit">
    <text evidence="1">Part of the 50S ribosomal subunit.</text>
</comment>
<comment type="similarity">
    <text evidence="1">Belongs to the universal ribosomal protein uL1 family.</text>
</comment>
<name>RL1_SHESM</name>
<organism>
    <name type="scientific">Shewanella sp. (strain MR-4)</name>
    <dbReference type="NCBI Taxonomy" id="60480"/>
    <lineage>
        <taxon>Bacteria</taxon>
        <taxon>Pseudomonadati</taxon>
        <taxon>Pseudomonadota</taxon>
        <taxon>Gammaproteobacteria</taxon>
        <taxon>Alteromonadales</taxon>
        <taxon>Shewanellaceae</taxon>
        <taxon>Shewanella</taxon>
    </lineage>
</organism>
<sequence length="233" mass="24629">MAKLTKRMRVIREKVDGTKLYEINDAVALLKELATAKFVESVDVAVNLGIDPRKSDQNVRGATVLPHGTGRDVRVAVFTQGANAEAAKAAGAELVGMDDLAEQIKAGEMNFDVVIASPDAMRVVGMLGQILGPRGLMPNPKTGTVTPNVAEAVKNAKAGQVRYRNDKNGIIHTTIGKVDFTPVQLKENLEALISALKKAKPAVAKGVYVKKVSISTTMGAGVAIDQATLETAN</sequence>
<keyword id="KW-0678">Repressor</keyword>
<keyword id="KW-0687">Ribonucleoprotein</keyword>
<keyword id="KW-0689">Ribosomal protein</keyword>
<keyword id="KW-0694">RNA-binding</keyword>
<keyword id="KW-0699">rRNA-binding</keyword>
<keyword id="KW-0810">Translation regulation</keyword>
<keyword id="KW-0820">tRNA-binding</keyword>
<feature type="chain" id="PRO_0000308103" description="Large ribosomal subunit protein uL1">
    <location>
        <begin position="1"/>
        <end position="233"/>
    </location>
</feature>
<protein>
    <recommendedName>
        <fullName evidence="1">Large ribosomal subunit protein uL1</fullName>
    </recommendedName>
    <alternativeName>
        <fullName evidence="2">50S ribosomal protein L1</fullName>
    </alternativeName>
</protein>
<gene>
    <name evidence="1" type="primary">rplA</name>
    <name type="ordered locus">Shewmr4_0189</name>
</gene>
<reference key="1">
    <citation type="submission" date="2006-08" db="EMBL/GenBank/DDBJ databases">
        <title>Complete sequence of Shewanella sp. MR-4.</title>
        <authorList>
            <consortium name="US DOE Joint Genome Institute"/>
            <person name="Copeland A."/>
            <person name="Lucas S."/>
            <person name="Lapidus A."/>
            <person name="Barry K."/>
            <person name="Detter J.C."/>
            <person name="Glavina del Rio T."/>
            <person name="Hammon N."/>
            <person name="Israni S."/>
            <person name="Dalin E."/>
            <person name="Tice H."/>
            <person name="Pitluck S."/>
            <person name="Kiss H."/>
            <person name="Brettin T."/>
            <person name="Bruce D."/>
            <person name="Han C."/>
            <person name="Tapia R."/>
            <person name="Gilna P."/>
            <person name="Schmutz J."/>
            <person name="Larimer F."/>
            <person name="Land M."/>
            <person name="Hauser L."/>
            <person name="Kyrpides N."/>
            <person name="Mikhailova N."/>
            <person name="Nealson K."/>
            <person name="Konstantinidis K."/>
            <person name="Klappenbach J."/>
            <person name="Tiedje J."/>
            <person name="Richardson P."/>
        </authorList>
    </citation>
    <scope>NUCLEOTIDE SEQUENCE [LARGE SCALE GENOMIC DNA]</scope>
    <source>
        <strain>MR-4</strain>
    </source>
</reference>
<dbReference type="EMBL" id="CP000446">
    <property type="protein sequence ID" value="ABI37270.1"/>
    <property type="molecule type" value="Genomic_DNA"/>
</dbReference>
<dbReference type="RefSeq" id="WP_011621020.1">
    <property type="nucleotide sequence ID" value="NC_008321.1"/>
</dbReference>
<dbReference type="SMR" id="Q0HNU7"/>
<dbReference type="KEGG" id="she:Shewmr4_0189"/>
<dbReference type="HOGENOM" id="CLU_062853_0_0_6"/>
<dbReference type="GO" id="GO:0022625">
    <property type="term" value="C:cytosolic large ribosomal subunit"/>
    <property type="evidence" value="ECO:0007669"/>
    <property type="project" value="TreeGrafter"/>
</dbReference>
<dbReference type="GO" id="GO:0019843">
    <property type="term" value="F:rRNA binding"/>
    <property type="evidence" value="ECO:0007669"/>
    <property type="project" value="UniProtKB-UniRule"/>
</dbReference>
<dbReference type="GO" id="GO:0003735">
    <property type="term" value="F:structural constituent of ribosome"/>
    <property type="evidence" value="ECO:0007669"/>
    <property type="project" value="InterPro"/>
</dbReference>
<dbReference type="GO" id="GO:0000049">
    <property type="term" value="F:tRNA binding"/>
    <property type="evidence" value="ECO:0007669"/>
    <property type="project" value="UniProtKB-KW"/>
</dbReference>
<dbReference type="GO" id="GO:0006417">
    <property type="term" value="P:regulation of translation"/>
    <property type="evidence" value="ECO:0007669"/>
    <property type="project" value="UniProtKB-KW"/>
</dbReference>
<dbReference type="GO" id="GO:0006412">
    <property type="term" value="P:translation"/>
    <property type="evidence" value="ECO:0007669"/>
    <property type="project" value="UniProtKB-UniRule"/>
</dbReference>
<dbReference type="CDD" id="cd00403">
    <property type="entry name" value="Ribosomal_L1"/>
    <property type="match status" value="1"/>
</dbReference>
<dbReference type="FunFam" id="3.40.50.790:FF:000001">
    <property type="entry name" value="50S ribosomal protein L1"/>
    <property type="match status" value="1"/>
</dbReference>
<dbReference type="Gene3D" id="3.30.190.20">
    <property type="match status" value="1"/>
</dbReference>
<dbReference type="Gene3D" id="3.40.50.790">
    <property type="match status" value="1"/>
</dbReference>
<dbReference type="HAMAP" id="MF_01318_B">
    <property type="entry name" value="Ribosomal_uL1_B"/>
    <property type="match status" value="1"/>
</dbReference>
<dbReference type="InterPro" id="IPR005878">
    <property type="entry name" value="Ribosom_uL1_bac-type"/>
</dbReference>
<dbReference type="InterPro" id="IPR002143">
    <property type="entry name" value="Ribosomal_uL1"/>
</dbReference>
<dbReference type="InterPro" id="IPR023674">
    <property type="entry name" value="Ribosomal_uL1-like"/>
</dbReference>
<dbReference type="InterPro" id="IPR028364">
    <property type="entry name" value="Ribosomal_uL1/biogenesis"/>
</dbReference>
<dbReference type="InterPro" id="IPR016095">
    <property type="entry name" value="Ribosomal_uL1_3-a/b-sand"/>
</dbReference>
<dbReference type="InterPro" id="IPR023673">
    <property type="entry name" value="Ribosomal_uL1_CS"/>
</dbReference>
<dbReference type="NCBIfam" id="TIGR01169">
    <property type="entry name" value="rplA_bact"/>
    <property type="match status" value="1"/>
</dbReference>
<dbReference type="PANTHER" id="PTHR36427">
    <property type="entry name" value="54S RIBOSOMAL PROTEIN L1, MITOCHONDRIAL"/>
    <property type="match status" value="1"/>
</dbReference>
<dbReference type="PANTHER" id="PTHR36427:SF3">
    <property type="entry name" value="LARGE RIBOSOMAL SUBUNIT PROTEIN UL1M"/>
    <property type="match status" value="1"/>
</dbReference>
<dbReference type="Pfam" id="PF00687">
    <property type="entry name" value="Ribosomal_L1"/>
    <property type="match status" value="1"/>
</dbReference>
<dbReference type="PIRSF" id="PIRSF002155">
    <property type="entry name" value="Ribosomal_L1"/>
    <property type="match status" value="1"/>
</dbReference>
<dbReference type="SUPFAM" id="SSF56808">
    <property type="entry name" value="Ribosomal protein L1"/>
    <property type="match status" value="1"/>
</dbReference>
<dbReference type="PROSITE" id="PS01199">
    <property type="entry name" value="RIBOSOMAL_L1"/>
    <property type="match status" value="1"/>
</dbReference>
<proteinExistence type="inferred from homology"/>
<evidence type="ECO:0000255" key="1">
    <source>
        <dbReference type="HAMAP-Rule" id="MF_01318"/>
    </source>
</evidence>
<evidence type="ECO:0000305" key="2"/>